<proteinExistence type="inferred from homology"/>
<evidence type="ECO:0000255" key="1">
    <source>
        <dbReference type="HAMAP-Rule" id="MF_00108"/>
    </source>
</evidence>
<accession>A8G9Z2</accession>
<comment type="function">
    <text evidence="1">Catalyzes the formation of 4-diphosphocytidyl-2-C-methyl-D-erythritol from CTP and 2-C-methyl-D-erythritol 4-phosphate (MEP).</text>
</comment>
<comment type="catalytic activity">
    <reaction evidence="1">
        <text>2-C-methyl-D-erythritol 4-phosphate + CTP + H(+) = 4-CDP-2-C-methyl-D-erythritol + diphosphate</text>
        <dbReference type="Rhea" id="RHEA:13429"/>
        <dbReference type="ChEBI" id="CHEBI:15378"/>
        <dbReference type="ChEBI" id="CHEBI:33019"/>
        <dbReference type="ChEBI" id="CHEBI:37563"/>
        <dbReference type="ChEBI" id="CHEBI:57823"/>
        <dbReference type="ChEBI" id="CHEBI:58262"/>
        <dbReference type="EC" id="2.7.7.60"/>
    </reaction>
</comment>
<comment type="pathway">
    <text evidence="1">Isoprenoid biosynthesis; isopentenyl diphosphate biosynthesis via DXP pathway; isopentenyl diphosphate from 1-deoxy-D-xylulose 5-phosphate: step 2/6.</text>
</comment>
<comment type="subunit">
    <text evidence="1">Homodimer.</text>
</comment>
<comment type="similarity">
    <text evidence="1">Belongs to the IspD/TarI cytidylyltransferase family. IspD subfamily.</text>
</comment>
<dbReference type="EC" id="2.7.7.60" evidence="1"/>
<dbReference type="EMBL" id="CP000826">
    <property type="protein sequence ID" value="ABV39932.1"/>
    <property type="molecule type" value="Genomic_DNA"/>
</dbReference>
<dbReference type="SMR" id="A8G9Z2"/>
<dbReference type="STRING" id="399741.Spro_0826"/>
<dbReference type="KEGG" id="spe:Spro_0826"/>
<dbReference type="eggNOG" id="COG1211">
    <property type="taxonomic scope" value="Bacteria"/>
</dbReference>
<dbReference type="HOGENOM" id="CLU_061281_3_1_6"/>
<dbReference type="OrthoDB" id="9806837at2"/>
<dbReference type="UniPathway" id="UPA00056">
    <property type="reaction ID" value="UER00093"/>
</dbReference>
<dbReference type="GO" id="GO:0050518">
    <property type="term" value="F:2-C-methyl-D-erythritol 4-phosphate cytidylyltransferase activity"/>
    <property type="evidence" value="ECO:0007669"/>
    <property type="project" value="UniProtKB-UniRule"/>
</dbReference>
<dbReference type="GO" id="GO:0019288">
    <property type="term" value="P:isopentenyl diphosphate biosynthetic process, methylerythritol 4-phosphate pathway"/>
    <property type="evidence" value="ECO:0007669"/>
    <property type="project" value="UniProtKB-UniRule"/>
</dbReference>
<dbReference type="CDD" id="cd02516">
    <property type="entry name" value="CDP-ME_synthetase"/>
    <property type="match status" value="1"/>
</dbReference>
<dbReference type="FunFam" id="3.90.550.10:FF:000003">
    <property type="entry name" value="2-C-methyl-D-erythritol 4-phosphate cytidylyltransferase"/>
    <property type="match status" value="1"/>
</dbReference>
<dbReference type="Gene3D" id="3.90.550.10">
    <property type="entry name" value="Spore Coat Polysaccharide Biosynthesis Protein SpsA, Chain A"/>
    <property type="match status" value="1"/>
</dbReference>
<dbReference type="HAMAP" id="MF_00108">
    <property type="entry name" value="IspD"/>
    <property type="match status" value="1"/>
</dbReference>
<dbReference type="InterPro" id="IPR001228">
    <property type="entry name" value="IspD"/>
</dbReference>
<dbReference type="InterPro" id="IPR034683">
    <property type="entry name" value="IspD/TarI"/>
</dbReference>
<dbReference type="InterPro" id="IPR050088">
    <property type="entry name" value="IspD/TarI_cytidylyltransf_bact"/>
</dbReference>
<dbReference type="InterPro" id="IPR018294">
    <property type="entry name" value="ISPD_synthase_CS"/>
</dbReference>
<dbReference type="InterPro" id="IPR029044">
    <property type="entry name" value="Nucleotide-diphossugar_trans"/>
</dbReference>
<dbReference type="NCBIfam" id="TIGR00453">
    <property type="entry name" value="ispD"/>
    <property type="match status" value="1"/>
</dbReference>
<dbReference type="PANTHER" id="PTHR32125">
    <property type="entry name" value="2-C-METHYL-D-ERYTHRITOL 4-PHOSPHATE CYTIDYLYLTRANSFERASE, CHLOROPLASTIC"/>
    <property type="match status" value="1"/>
</dbReference>
<dbReference type="PANTHER" id="PTHR32125:SF4">
    <property type="entry name" value="2-C-METHYL-D-ERYTHRITOL 4-PHOSPHATE CYTIDYLYLTRANSFERASE, CHLOROPLASTIC"/>
    <property type="match status" value="1"/>
</dbReference>
<dbReference type="Pfam" id="PF01128">
    <property type="entry name" value="IspD"/>
    <property type="match status" value="1"/>
</dbReference>
<dbReference type="SUPFAM" id="SSF53448">
    <property type="entry name" value="Nucleotide-diphospho-sugar transferases"/>
    <property type="match status" value="1"/>
</dbReference>
<dbReference type="PROSITE" id="PS01295">
    <property type="entry name" value="ISPD"/>
    <property type="match status" value="1"/>
</dbReference>
<organism>
    <name type="scientific">Serratia proteamaculans (strain 568)</name>
    <dbReference type="NCBI Taxonomy" id="399741"/>
    <lineage>
        <taxon>Bacteria</taxon>
        <taxon>Pseudomonadati</taxon>
        <taxon>Pseudomonadota</taxon>
        <taxon>Gammaproteobacteria</taxon>
        <taxon>Enterobacterales</taxon>
        <taxon>Yersiniaceae</taxon>
        <taxon>Serratia</taxon>
    </lineage>
</organism>
<feature type="chain" id="PRO_1000057720" description="2-C-methyl-D-erythritol 4-phosphate cytidylyltransferase">
    <location>
        <begin position="1"/>
        <end position="235"/>
    </location>
</feature>
<feature type="site" description="Transition state stabilizer" evidence="1">
    <location>
        <position position="23"/>
    </location>
</feature>
<feature type="site" description="Transition state stabilizer" evidence="1">
    <location>
        <position position="30"/>
    </location>
</feature>
<feature type="site" description="Positions MEP for the nucleophilic attack" evidence="1">
    <location>
        <position position="160"/>
    </location>
</feature>
<feature type="site" description="Positions MEP for the nucleophilic attack" evidence="1">
    <location>
        <position position="216"/>
    </location>
</feature>
<reference key="1">
    <citation type="submission" date="2007-09" db="EMBL/GenBank/DDBJ databases">
        <title>Complete sequence of chromosome of Serratia proteamaculans 568.</title>
        <authorList>
            <consortium name="US DOE Joint Genome Institute"/>
            <person name="Copeland A."/>
            <person name="Lucas S."/>
            <person name="Lapidus A."/>
            <person name="Barry K."/>
            <person name="Glavina del Rio T."/>
            <person name="Dalin E."/>
            <person name="Tice H."/>
            <person name="Pitluck S."/>
            <person name="Chain P."/>
            <person name="Malfatti S."/>
            <person name="Shin M."/>
            <person name="Vergez L."/>
            <person name="Schmutz J."/>
            <person name="Larimer F."/>
            <person name="Land M."/>
            <person name="Hauser L."/>
            <person name="Kyrpides N."/>
            <person name="Kim E."/>
            <person name="Taghavi S."/>
            <person name="Newman L."/>
            <person name="Vangronsveld J."/>
            <person name="van der Lelie D."/>
            <person name="Richardson P."/>
        </authorList>
    </citation>
    <scope>NUCLEOTIDE SEQUENCE [LARGE SCALE GENOMIC DNA]</scope>
    <source>
        <strain>568</strain>
    </source>
</reference>
<sequence>MNHSAGTFPPVIAVLPAAGIGSRMQADCPKQYLTIGHQTILEHAIHALLRHPRIPQVIVAIGPDDQQFHQLPIAKDPRVRVTVGGQQRADSVMAGLQLAGEAKWVLVHDAARPCLHAEDLERLLAITEHSEVGGILAAPVRDTMKRAEPGRSTISHTVERQDLWHALTPQLFPLALLKLCLQRAMDDGATVTDEASALEHCGYHPLLVSGRSDNIKVTRPEDLALAAFYLTQLDN</sequence>
<protein>
    <recommendedName>
        <fullName evidence="1">2-C-methyl-D-erythritol 4-phosphate cytidylyltransferase</fullName>
        <ecNumber evidence="1">2.7.7.60</ecNumber>
    </recommendedName>
    <alternativeName>
        <fullName evidence="1">4-diphosphocytidyl-2C-methyl-D-erythritol synthase</fullName>
    </alternativeName>
    <alternativeName>
        <fullName evidence="1">MEP cytidylyltransferase</fullName>
        <shortName evidence="1">MCT</shortName>
    </alternativeName>
</protein>
<name>ISPD_SERP5</name>
<keyword id="KW-0414">Isoprene biosynthesis</keyword>
<keyword id="KW-0548">Nucleotidyltransferase</keyword>
<keyword id="KW-0808">Transferase</keyword>
<gene>
    <name evidence="1" type="primary">ispD</name>
    <name type="ordered locus">Spro_0826</name>
</gene>